<protein>
    <recommendedName>
        <fullName evidence="1">Peptidase B</fullName>
        <ecNumber evidence="1">3.4.11.23</ecNumber>
    </recommendedName>
    <alternativeName>
        <fullName evidence="1">Aminopeptidase B</fullName>
    </alternativeName>
</protein>
<sequence length="427" mass="46212">MTEAMKITLSTQPADARWGEKATYSINNDGITLHLNGADDLGLIQRAARKIDGLGIKHVQLSGEGWDADRCWAFWQGYKGPKGTRKVEWPDLDDAQRQELDNRLMIIDWVRDTINAPAEELGPSQLAQRAVDLISNVAGDRVTYRITKGEDLREQGYMGLHTVGRGSERSPVLLALDYNPTGDKEAPVYACLVGKGITFDSGGYSIKQTAFMDSMKSDMGGAATVTGALAFAITRGLNKRVKLFLCCADNLISGNAFKLGDIITYRNGKKVEVMNTDAEGRLVLADGLIDASAQKPEMIIDAATLTGAAKTALGNDYHALFSFDDALAGRLLASASQENEPFWRLPLAEFHRSQLPSNFAELNNTGSAAYPAGASTAAGFLSHFVENYQQGWLHIDCSATYRKAPVEQWSAGATGLGVRTIANLLTA</sequence>
<feature type="chain" id="PRO_1000014891" description="Peptidase B">
    <location>
        <begin position="1"/>
        <end position="427"/>
    </location>
</feature>
<feature type="active site" evidence="1">
    <location>
        <position position="207"/>
    </location>
</feature>
<feature type="active site" evidence="1">
    <location>
        <position position="281"/>
    </location>
</feature>
<feature type="binding site" evidence="1">
    <location>
        <position position="195"/>
    </location>
    <ligand>
        <name>Mn(2+)</name>
        <dbReference type="ChEBI" id="CHEBI:29035"/>
        <label>2</label>
    </ligand>
</feature>
<feature type="binding site" evidence="1">
    <location>
        <position position="200"/>
    </location>
    <ligand>
        <name>Mn(2+)</name>
        <dbReference type="ChEBI" id="CHEBI:29035"/>
        <label>1</label>
    </ligand>
</feature>
<feature type="binding site" evidence="1">
    <location>
        <position position="200"/>
    </location>
    <ligand>
        <name>Mn(2+)</name>
        <dbReference type="ChEBI" id="CHEBI:29035"/>
        <label>2</label>
    </ligand>
</feature>
<feature type="binding site" evidence="1">
    <location>
        <position position="218"/>
    </location>
    <ligand>
        <name>Mn(2+)</name>
        <dbReference type="ChEBI" id="CHEBI:29035"/>
        <label>2</label>
    </ligand>
</feature>
<feature type="binding site" evidence="1">
    <location>
        <position position="277"/>
    </location>
    <ligand>
        <name>Mn(2+)</name>
        <dbReference type="ChEBI" id="CHEBI:29035"/>
        <label>1</label>
    </ligand>
</feature>
<feature type="binding site" evidence="1">
    <location>
        <position position="279"/>
    </location>
    <ligand>
        <name>Mn(2+)</name>
        <dbReference type="ChEBI" id="CHEBI:29035"/>
        <label>1</label>
    </ligand>
</feature>
<feature type="binding site" evidence="1">
    <location>
        <position position="279"/>
    </location>
    <ligand>
        <name>Mn(2+)</name>
        <dbReference type="ChEBI" id="CHEBI:29035"/>
        <label>2</label>
    </ligand>
</feature>
<evidence type="ECO:0000255" key="1">
    <source>
        <dbReference type="HAMAP-Rule" id="MF_00504"/>
    </source>
</evidence>
<comment type="function">
    <text evidence="1">Probably plays an important role in intracellular peptide degradation.</text>
</comment>
<comment type="catalytic activity">
    <reaction evidence="1">
        <text>Release of an N-terminal amino acid, Xaa, from a peptide or arylamide. Xaa is preferably Glu or Asp but may be other amino acids, including Leu, Met, His, Cys and Gln.</text>
        <dbReference type="EC" id="3.4.11.23"/>
    </reaction>
</comment>
<comment type="cofactor">
    <cofactor evidence="1">
        <name>Mn(2+)</name>
        <dbReference type="ChEBI" id="CHEBI:29035"/>
    </cofactor>
    <text evidence="1">Binds 2 manganese ions per subunit.</text>
</comment>
<comment type="subunit">
    <text evidence="1">Homohexamer.</text>
</comment>
<comment type="subcellular location">
    <subcellularLocation>
        <location evidence="1">Cytoplasm</location>
    </subcellularLocation>
</comment>
<comment type="similarity">
    <text evidence="1">Belongs to the peptidase M17 family.</text>
</comment>
<name>PEPB_SHIF8</name>
<keyword id="KW-0031">Aminopeptidase</keyword>
<keyword id="KW-0963">Cytoplasm</keyword>
<keyword id="KW-0378">Hydrolase</keyword>
<keyword id="KW-0464">Manganese</keyword>
<keyword id="KW-0479">Metal-binding</keyword>
<keyword id="KW-0645">Protease</keyword>
<reference key="1">
    <citation type="journal article" date="2006" name="BMC Genomics">
        <title>Complete genome sequence of Shigella flexneri 5b and comparison with Shigella flexneri 2a.</title>
        <authorList>
            <person name="Nie H."/>
            <person name="Yang F."/>
            <person name="Zhang X."/>
            <person name="Yang J."/>
            <person name="Chen L."/>
            <person name="Wang J."/>
            <person name="Xiong Z."/>
            <person name="Peng J."/>
            <person name="Sun L."/>
            <person name="Dong J."/>
            <person name="Xue Y."/>
            <person name="Xu X."/>
            <person name="Chen S."/>
            <person name="Yao Z."/>
            <person name="Shen Y."/>
            <person name="Jin Q."/>
        </authorList>
    </citation>
    <scope>NUCLEOTIDE SEQUENCE [LARGE SCALE GENOMIC DNA]</scope>
    <source>
        <strain>8401</strain>
    </source>
</reference>
<proteinExistence type="inferred from homology"/>
<dbReference type="EC" id="3.4.11.23" evidence="1"/>
<dbReference type="EMBL" id="CP000266">
    <property type="protein sequence ID" value="ABF04669.1"/>
    <property type="molecule type" value="Genomic_DNA"/>
</dbReference>
<dbReference type="RefSeq" id="WP_000133600.1">
    <property type="nucleotide sequence ID" value="NC_008258.1"/>
</dbReference>
<dbReference type="SMR" id="Q0T1Z6"/>
<dbReference type="MEROPS" id="M17.004"/>
<dbReference type="KEGG" id="sfv:SFV_2571"/>
<dbReference type="HOGENOM" id="CLU_013734_7_1_6"/>
<dbReference type="Proteomes" id="UP000000659">
    <property type="component" value="Chromosome"/>
</dbReference>
<dbReference type="GO" id="GO:0005737">
    <property type="term" value="C:cytoplasm"/>
    <property type="evidence" value="ECO:0007669"/>
    <property type="project" value="UniProtKB-SubCell"/>
</dbReference>
<dbReference type="GO" id="GO:0030145">
    <property type="term" value="F:manganese ion binding"/>
    <property type="evidence" value="ECO:0007669"/>
    <property type="project" value="UniProtKB-UniRule"/>
</dbReference>
<dbReference type="GO" id="GO:0070006">
    <property type="term" value="F:metalloaminopeptidase activity"/>
    <property type="evidence" value="ECO:0007669"/>
    <property type="project" value="InterPro"/>
</dbReference>
<dbReference type="GO" id="GO:0006508">
    <property type="term" value="P:proteolysis"/>
    <property type="evidence" value="ECO:0007669"/>
    <property type="project" value="UniProtKB-UniRule"/>
</dbReference>
<dbReference type="CDD" id="cd00433">
    <property type="entry name" value="Peptidase_M17"/>
    <property type="match status" value="1"/>
</dbReference>
<dbReference type="FunFam" id="3.40.630.10:FF:000037">
    <property type="entry name" value="Peptidase B"/>
    <property type="match status" value="1"/>
</dbReference>
<dbReference type="Gene3D" id="3.40.630.10">
    <property type="entry name" value="Zn peptidases"/>
    <property type="match status" value="1"/>
</dbReference>
<dbReference type="HAMAP" id="MF_00504">
    <property type="entry name" value="Aminopeptidase_M17"/>
    <property type="match status" value="1"/>
</dbReference>
<dbReference type="InterPro" id="IPR011356">
    <property type="entry name" value="Leucine_aapep/pepB"/>
</dbReference>
<dbReference type="InterPro" id="IPR047620">
    <property type="entry name" value="M17_PepB-like_N"/>
</dbReference>
<dbReference type="InterPro" id="IPR008330">
    <property type="entry name" value="Pept_M17_PepB"/>
</dbReference>
<dbReference type="InterPro" id="IPR000819">
    <property type="entry name" value="Peptidase_M17_C"/>
</dbReference>
<dbReference type="NCBIfam" id="NF003450">
    <property type="entry name" value="PRK05015.1"/>
    <property type="match status" value="1"/>
</dbReference>
<dbReference type="PANTHER" id="PTHR11963">
    <property type="entry name" value="LEUCINE AMINOPEPTIDASE-RELATED"/>
    <property type="match status" value="1"/>
</dbReference>
<dbReference type="PANTHER" id="PTHR11963:SF20">
    <property type="entry name" value="PEPTIDASE B"/>
    <property type="match status" value="1"/>
</dbReference>
<dbReference type="Pfam" id="PF12404">
    <property type="entry name" value="DUF3663"/>
    <property type="match status" value="1"/>
</dbReference>
<dbReference type="Pfam" id="PF00883">
    <property type="entry name" value="Peptidase_M17"/>
    <property type="match status" value="1"/>
</dbReference>
<dbReference type="PIRSF" id="PIRSF036388">
    <property type="entry name" value="Ctsl_amnpptdse_B"/>
    <property type="match status" value="1"/>
</dbReference>
<dbReference type="PRINTS" id="PR00481">
    <property type="entry name" value="LAMNOPPTDASE"/>
</dbReference>
<dbReference type="SUPFAM" id="SSF53187">
    <property type="entry name" value="Zn-dependent exopeptidases"/>
    <property type="match status" value="1"/>
</dbReference>
<dbReference type="PROSITE" id="PS00631">
    <property type="entry name" value="CYTOSOL_AP"/>
    <property type="match status" value="1"/>
</dbReference>
<organism>
    <name type="scientific">Shigella flexneri serotype 5b (strain 8401)</name>
    <dbReference type="NCBI Taxonomy" id="373384"/>
    <lineage>
        <taxon>Bacteria</taxon>
        <taxon>Pseudomonadati</taxon>
        <taxon>Pseudomonadota</taxon>
        <taxon>Gammaproteobacteria</taxon>
        <taxon>Enterobacterales</taxon>
        <taxon>Enterobacteriaceae</taxon>
        <taxon>Shigella</taxon>
    </lineage>
</organism>
<accession>Q0T1Z6</accession>
<gene>
    <name evidence="1" type="primary">pepB</name>
    <name type="ordered locus">SFV_2571</name>
</gene>